<keyword id="KW-0004">4Fe-4S</keyword>
<keyword id="KW-0342">GTP-binding</keyword>
<keyword id="KW-0408">Iron</keyword>
<keyword id="KW-0411">Iron-sulfur</keyword>
<keyword id="KW-0456">Lyase</keyword>
<keyword id="KW-0479">Metal-binding</keyword>
<keyword id="KW-0501">Molybdenum cofactor biosynthesis</keyword>
<keyword id="KW-0547">Nucleotide-binding</keyword>
<keyword id="KW-0949">S-adenosyl-L-methionine</keyword>
<proteinExistence type="inferred from homology"/>
<name>MOAA_MYCUA</name>
<accession>A0PKZ7</accession>
<comment type="function">
    <text evidence="1">Catalyzes the cyclization of GTP to (8S)-3',8-cyclo-7,8-dihydroguanosine 5'-triphosphate.</text>
</comment>
<comment type="catalytic activity">
    <reaction evidence="1">
        <text>GTP + AH2 + S-adenosyl-L-methionine = (8S)-3',8-cyclo-7,8-dihydroguanosine 5'-triphosphate + 5'-deoxyadenosine + L-methionine + A + H(+)</text>
        <dbReference type="Rhea" id="RHEA:49576"/>
        <dbReference type="ChEBI" id="CHEBI:13193"/>
        <dbReference type="ChEBI" id="CHEBI:15378"/>
        <dbReference type="ChEBI" id="CHEBI:17319"/>
        <dbReference type="ChEBI" id="CHEBI:17499"/>
        <dbReference type="ChEBI" id="CHEBI:37565"/>
        <dbReference type="ChEBI" id="CHEBI:57844"/>
        <dbReference type="ChEBI" id="CHEBI:59789"/>
        <dbReference type="ChEBI" id="CHEBI:131766"/>
        <dbReference type="EC" id="4.1.99.22"/>
    </reaction>
</comment>
<comment type="cofactor">
    <cofactor evidence="1">
        <name>[4Fe-4S] cluster</name>
        <dbReference type="ChEBI" id="CHEBI:49883"/>
    </cofactor>
    <text evidence="1">Binds 2 [4Fe-4S] clusters. Binds 1 [4Fe-4S] cluster coordinated with 3 cysteines and an exchangeable S-adenosyl-L-methionine and 1 [4Fe-4S] cluster coordinated with 3 cysteines and the GTP-derived substrate.</text>
</comment>
<comment type="pathway">
    <text evidence="1">Cofactor biosynthesis; molybdopterin biosynthesis.</text>
</comment>
<comment type="subunit">
    <text evidence="1">Monomer and homodimer.</text>
</comment>
<comment type="similarity">
    <text evidence="1">Belongs to the radical SAM superfamily. MoaA family.</text>
</comment>
<dbReference type="EC" id="4.1.99.22" evidence="1"/>
<dbReference type="EMBL" id="CP000325">
    <property type="protein sequence ID" value="ABL03016.1"/>
    <property type="molecule type" value="Genomic_DNA"/>
</dbReference>
<dbReference type="RefSeq" id="WP_011738641.1">
    <property type="nucleotide sequence ID" value="NC_008611.1"/>
</dbReference>
<dbReference type="SMR" id="A0PKZ7"/>
<dbReference type="KEGG" id="mul:MUL_0281"/>
<dbReference type="eggNOG" id="COG2896">
    <property type="taxonomic scope" value="Bacteria"/>
</dbReference>
<dbReference type="HOGENOM" id="CLU_009273_0_1_11"/>
<dbReference type="UniPathway" id="UPA00344"/>
<dbReference type="Proteomes" id="UP000000765">
    <property type="component" value="Chromosome"/>
</dbReference>
<dbReference type="GO" id="GO:0051539">
    <property type="term" value="F:4 iron, 4 sulfur cluster binding"/>
    <property type="evidence" value="ECO:0007669"/>
    <property type="project" value="UniProtKB-UniRule"/>
</dbReference>
<dbReference type="GO" id="GO:0061799">
    <property type="term" value="F:cyclic pyranopterin monophosphate synthase activity"/>
    <property type="evidence" value="ECO:0007669"/>
    <property type="project" value="TreeGrafter"/>
</dbReference>
<dbReference type="GO" id="GO:0061798">
    <property type="term" value="F:GTP 3',8'-cyclase activity"/>
    <property type="evidence" value="ECO:0007669"/>
    <property type="project" value="UniProtKB-UniRule"/>
</dbReference>
<dbReference type="GO" id="GO:0005525">
    <property type="term" value="F:GTP binding"/>
    <property type="evidence" value="ECO:0007669"/>
    <property type="project" value="UniProtKB-UniRule"/>
</dbReference>
<dbReference type="GO" id="GO:0046872">
    <property type="term" value="F:metal ion binding"/>
    <property type="evidence" value="ECO:0007669"/>
    <property type="project" value="UniProtKB-KW"/>
</dbReference>
<dbReference type="GO" id="GO:1904047">
    <property type="term" value="F:S-adenosyl-L-methionine binding"/>
    <property type="evidence" value="ECO:0007669"/>
    <property type="project" value="UniProtKB-UniRule"/>
</dbReference>
<dbReference type="GO" id="GO:0006777">
    <property type="term" value="P:Mo-molybdopterin cofactor biosynthetic process"/>
    <property type="evidence" value="ECO:0007669"/>
    <property type="project" value="UniProtKB-UniRule"/>
</dbReference>
<dbReference type="CDD" id="cd01335">
    <property type="entry name" value="Radical_SAM"/>
    <property type="match status" value="1"/>
</dbReference>
<dbReference type="CDD" id="cd21117">
    <property type="entry name" value="Twitch_MoaA"/>
    <property type="match status" value="1"/>
</dbReference>
<dbReference type="Gene3D" id="3.20.20.70">
    <property type="entry name" value="Aldolase class I"/>
    <property type="match status" value="1"/>
</dbReference>
<dbReference type="HAMAP" id="MF_01225_B">
    <property type="entry name" value="MoaA_B"/>
    <property type="match status" value="1"/>
</dbReference>
<dbReference type="InterPro" id="IPR013785">
    <property type="entry name" value="Aldolase_TIM"/>
</dbReference>
<dbReference type="InterPro" id="IPR006638">
    <property type="entry name" value="Elp3/MiaA/NifB-like_rSAM"/>
</dbReference>
<dbReference type="InterPro" id="IPR013483">
    <property type="entry name" value="MoaA"/>
</dbReference>
<dbReference type="InterPro" id="IPR000385">
    <property type="entry name" value="MoaA_NifB_PqqE_Fe-S-bd_CS"/>
</dbReference>
<dbReference type="InterPro" id="IPR010505">
    <property type="entry name" value="MoaA_twitch"/>
</dbReference>
<dbReference type="InterPro" id="IPR050105">
    <property type="entry name" value="MoCo_biosynth_MoaA/MoaC"/>
</dbReference>
<dbReference type="InterPro" id="IPR007197">
    <property type="entry name" value="rSAM"/>
</dbReference>
<dbReference type="NCBIfam" id="TIGR02666">
    <property type="entry name" value="moaA"/>
    <property type="match status" value="1"/>
</dbReference>
<dbReference type="PANTHER" id="PTHR22960:SF0">
    <property type="entry name" value="MOLYBDENUM COFACTOR BIOSYNTHESIS PROTEIN 1"/>
    <property type="match status" value="1"/>
</dbReference>
<dbReference type="PANTHER" id="PTHR22960">
    <property type="entry name" value="MOLYBDOPTERIN COFACTOR SYNTHESIS PROTEIN A"/>
    <property type="match status" value="1"/>
</dbReference>
<dbReference type="Pfam" id="PF06463">
    <property type="entry name" value="Mob_synth_C"/>
    <property type="match status" value="1"/>
</dbReference>
<dbReference type="Pfam" id="PF04055">
    <property type="entry name" value="Radical_SAM"/>
    <property type="match status" value="1"/>
</dbReference>
<dbReference type="SFLD" id="SFLDG01383">
    <property type="entry name" value="cyclic_pyranopterin_phosphate"/>
    <property type="match status" value="1"/>
</dbReference>
<dbReference type="SFLD" id="SFLDG01072">
    <property type="entry name" value="dehydrogenase_like"/>
    <property type="match status" value="1"/>
</dbReference>
<dbReference type="SMART" id="SM00729">
    <property type="entry name" value="Elp3"/>
    <property type="match status" value="1"/>
</dbReference>
<dbReference type="SUPFAM" id="SSF102114">
    <property type="entry name" value="Radical SAM enzymes"/>
    <property type="match status" value="1"/>
</dbReference>
<dbReference type="PROSITE" id="PS01305">
    <property type="entry name" value="MOAA_NIFB_PQQE"/>
    <property type="match status" value="1"/>
</dbReference>
<dbReference type="PROSITE" id="PS51918">
    <property type="entry name" value="RADICAL_SAM"/>
    <property type="match status" value="1"/>
</dbReference>
<sequence length="360" mass="38245">MTVTALGVPTVRGRSEGSAVASDAPGDGPLLDRFGRSATDLRVSLTDRCNLRCGYCMPAEGLNWLPGEQLLGPAELARLPRIAVTPLGITSVRFTGGEPLLARHLEEVVAAAAQLRPRPEISLTTNGVGLAKRAAALAEAGLDRVNVSLDTVDRAHFAAVTRRDRLTDVLDGLAGARAAGLTPVKVNAVLDPETGRQDVVELLRFCLEQGYQLRVIEQMPLDAGHQWRRNALLGSDDVLAALQPHFRLRPDPAPRGSAPAELWLVDAGPDTPAGKFGVIASVSHAFCSTCDRTRLTADGQVRSCLFSTEETDLRGLLRAGAGDEAIEAAWRGAMWAKPAGHGINNPDFLQPQRPMSAIGG</sequence>
<organism>
    <name type="scientific">Mycobacterium ulcerans (strain Agy99)</name>
    <dbReference type="NCBI Taxonomy" id="362242"/>
    <lineage>
        <taxon>Bacteria</taxon>
        <taxon>Bacillati</taxon>
        <taxon>Actinomycetota</taxon>
        <taxon>Actinomycetes</taxon>
        <taxon>Mycobacteriales</taxon>
        <taxon>Mycobacteriaceae</taxon>
        <taxon>Mycobacterium</taxon>
        <taxon>Mycobacterium ulcerans group</taxon>
    </lineage>
</organism>
<evidence type="ECO:0000255" key="1">
    <source>
        <dbReference type="HAMAP-Rule" id="MF_01225"/>
    </source>
</evidence>
<evidence type="ECO:0000255" key="2">
    <source>
        <dbReference type="PROSITE-ProRule" id="PRU01266"/>
    </source>
</evidence>
<evidence type="ECO:0000256" key="3">
    <source>
        <dbReference type="SAM" id="MobiDB-lite"/>
    </source>
</evidence>
<feature type="chain" id="PRO_1000054205" description="GTP 3',8-cyclase">
    <location>
        <begin position="1"/>
        <end position="360"/>
    </location>
</feature>
<feature type="domain" description="Radical SAM core" evidence="2">
    <location>
        <begin position="33"/>
        <end position="251"/>
    </location>
</feature>
<feature type="region of interest" description="Disordered" evidence="3">
    <location>
        <begin position="1"/>
        <end position="31"/>
    </location>
</feature>
<feature type="binding site" evidence="1">
    <location>
        <position position="42"/>
    </location>
    <ligand>
        <name>GTP</name>
        <dbReference type="ChEBI" id="CHEBI:37565"/>
    </ligand>
</feature>
<feature type="binding site" evidence="1">
    <location>
        <position position="49"/>
    </location>
    <ligand>
        <name>[4Fe-4S] cluster</name>
        <dbReference type="ChEBI" id="CHEBI:49883"/>
        <label>1</label>
        <note>4Fe-4S-S-AdoMet</note>
    </ligand>
</feature>
<feature type="binding site" evidence="1">
    <location>
        <position position="53"/>
    </location>
    <ligand>
        <name>[4Fe-4S] cluster</name>
        <dbReference type="ChEBI" id="CHEBI:49883"/>
        <label>1</label>
        <note>4Fe-4S-S-AdoMet</note>
    </ligand>
</feature>
<feature type="binding site" evidence="1">
    <location>
        <position position="55"/>
    </location>
    <ligand>
        <name>S-adenosyl-L-methionine</name>
        <dbReference type="ChEBI" id="CHEBI:59789"/>
    </ligand>
</feature>
<feature type="binding site" evidence="1">
    <location>
        <position position="56"/>
    </location>
    <ligand>
        <name>[4Fe-4S] cluster</name>
        <dbReference type="ChEBI" id="CHEBI:49883"/>
        <label>1</label>
        <note>4Fe-4S-S-AdoMet</note>
    </ligand>
</feature>
<feature type="binding site" evidence="1">
    <location>
        <position position="93"/>
    </location>
    <ligand>
        <name>GTP</name>
        <dbReference type="ChEBI" id="CHEBI:37565"/>
    </ligand>
</feature>
<feature type="binding site" evidence="1">
    <location>
        <position position="97"/>
    </location>
    <ligand>
        <name>S-adenosyl-L-methionine</name>
        <dbReference type="ChEBI" id="CHEBI:59789"/>
    </ligand>
</feature>
<feature type="binding site" evidence="1">
    <location>
        <position position="124"/>
    </location>
    <ligand>
        <name>GTP</name>
        <dbReference type="ChEBI" id="CHEBI:37565"/>
    </ligand>
</feature>
<feature type="binding site" evidence="1">
    <location>
        <position position="148"/>
    </location>
    <ligand>
        <name>S-adenosyl-L-methionine</name>
        <dbReference type="ChEBI" id="CHEBI:59789"/>
    </ligand>
</feature>
<feature type="binding site" evidence="1">
    <location>
        <position position="185"/>
    </location>
    <ligand>
        <name>GTP</name>
        <dbReference type="ChEBI" id="CHEBI:37565"/>
    </ligand>
</feature>
<feature type="binding site" evidence="1">
    <location>
        <position position="219"/>
    </location>
    <ligand>
        <name>S-adenosyl-L-methionine</name>
        <dbReference type="ChEBI" id="CHEBI:59789"/>
    </ligand>
</feature>
<feature type="binding site" evidence="1">
    <location>
        <position position="287"/>
    </location>
    <ligand>
        <name>[4Fe-4S] cluster</name>
        <dbReference type="ChEBI" id="CHEBI:49883"/>
        <label>2</label>
        <note>4Fe-4S-substrate</note>
    </ligand>
</feature>
<feature type="binding site" evidence="1">
    <location>
        <position position="290"/>
    </location>
    <ligand>
        <name>[4Fe-4S] cluster</name>
        <dbReference type="ChEBI" id="CHEBI:49883"/>
        <label>2</label>
        <note>4Fe-4S-substrate</note>
    </ligand>
</feature>
<feature type="binding site" evidence="1">
    <location>
        <begin position="292"/>
        <end position="294"/>
    </location>
    <ligand>
        <name>GTP</name>
        <dbReference type="ChEBI" id="CHEBI:37565"/>
    </ligand>
</feature>
<feature type="binding site" evidence="1">
    <location>
        <position position="304"/>
    </location>
    <ligand>
        <name>[4Fe-4S] cluster</name>
        <dbReference type="ChEBI" id="CHEBI:49883"/>
        <label>2</label>
        <note>4Fe-4S-substrate</note>
    </ligand>
</feature>
<protein>
    <recommendedName>
        <fullName evidence="1">GTP 3',8-cyclase</fullName>
        <ecNumber evidence="1">4.1.99.22</ecNumber>
    </recommendedName>
    <alternativeName>
        <fullName evidence="1">Molybdenum cofactor biosynthesis protein A</fullName>
    </alternativeName>
</protein>
<gene>
    <name evidence="1" type="primary">moaA</name>
    <name type="ordered locus">MUL_0281</name>
</gene>
<reference key="1">
    <citation type="journal article" date="2007" name="Genome Res.">
        <title>Reductive evolution and niche adaptation inferred from the genome of Mycobacterium ulcerans, the causative agent of Buruli ulcer.</title>
        <authorList>
            <person name="Stinear T.P."/>
            <person name="Seemann T."/>
            <person name="Pidot S."/>
            <person name="Frigui W."/>
            <person name="Reysset G."/>
            <person name="Garnier T."/>
            <person name="Meurice G."/>
            <person name="Simon D."/>
            <person name="Bouchier C."/>
            <person name="Ma L."/>
            <person name="Tichit M."/>
            <person name="Porter J.L."/>
            <person name="Ryan J."/>
            <person name="Johnson P.D.R."/>
            <person name="Davies J.K."/>
            <person name="Jenkin G.A."/>
            <person name="Small P.L.C."/>
            <person name="Jones L.M."/>
            <person name="Tekaia F."/>
            <person name="Laval F."/>
            <person name="Daffe M."/>
            <person name="Parkhill J."/>
            <person name="Cole S.T."/>
        </authorList>
    </citation>
    <scope>NUCLEOTIDE SEQUENCE [LARGE SCALE GENOMIC DNA]</scope>
    <source>
        <strain>Agy99</strain>
    </source>
</reference>